<accession>P85016</accession>
<feature type="peptide" id="PRO_0000259390" description="Conotoxin Reg12a" evidence="2">
    <location>
        <begin position="1"/>
        <end position="17"/>
    </location>
</feature>
<feature type="modified residue" description="4-hydroxyproline" evidence="2">
    <location>
        <position position="4"/>
    </location>
</feature>
<feature type="modified residue" description="4-hydroxyproline" evidence="2">
    <location>
        <position position="5"/>
    </location>
</feature>
<feature type="modified residue" description="4-hydroxyproline" evidence="2">
    <location>
        <position position="10"/>
    </location>
</feature>
<feature type="modified residue" description="4-hydroxyproline" evidence="2">
    <location>
        <position position="15"/>
    </location>
</feature>
<evidence type="ECO:0000250" key="1"/>
<evidence type="ECO:0000269" key="2">
    <source>
    </source>
</evidence>
<evidence type="ECO:0000303" key="3">
    <source>
    </source>
</evidence>
<evidence type="ECO:0000305" key="4"/>
<name>CMCA_CONRE</name>
<sequence length="17" mass="1699">GCCPPQWCGPGCTSPCC</sequence>
<protein>
    <recommendedName>
        <fullName evidence="3">Conotoxin Reg12a</fullName>
    </recommendedName>
</protein>
<keyword id="KW-0903">Direct protein sequencing</keyword>
<keyword id="KW-1015">Disulfide bond</keyword>
<keyword id="KW-0379">Hydroxylation</keyword>
<keyword id="KW-0964">Secreted</keyword>
<keyword id="KW-0800">Toxin</keyword>
<organism>
    <name type="scientific">Conus regius</name>
    <name type="common">Crown cone</name>
    <dbReference type="NCBI Taxonomy" id="101314"/>
    <lineage>
        <taxon>Eukaryota</taxon>
        <taxon>Metazoa</taxon>
        <taxon>Spiralia</taxon>
        <taxon>Lophotrochozoa</taxon>
        <taxon>Mollusca</taxon>
        <taxon>Gastropoda</taxon>
        <taxon>Caenogastropoda</taxon>
        <taxon>Neogastropoda</taxon>
        <taxon>Conoidea</taxon>
        <taxon>Conidae</taxon>
        <taxon>Conus</taxon>
        <taxon>Stephanoconus</taxon>
    </lineage>
</organism>
<proteinExistence type="evidence at protein level"/>
<dbReference type="ConoServer" id="8570">
    <property type="toxin name" value="reg3a"/>
</dbReference>
<dbReference type="GO" id="GO:0005576">
    <property type="term" value="C:extracellular region"/>
    <property type="evidence" value="ECO:0007669"/>
    <property type="project" value="UniProtKB-SubCell"/>
</dbReference>
<dbReference type="GO" id="GO:0090729">
    <property type="term" value="F:toxin activity"/>
    <property type="evidence" value="ECO:0007669"/>
    <property type="project" value="UniProtKB-KW"/>
</dbReference>
<reference key="1">
    <citation type="journal article" date="2006" name="Prog. Mol. Subcell. Biol.">
        <title>Hyperhydroxylation: a new strategy for neuronal targeting by venomous marine molluscs.</title>
        <authorList>
            <person name="Franco A."/>
            <person name="Pisarewicz K."/>
            <person name="Moller C."/>
            <person name="Mora D."/>
            <person name="Fields G.B."/>
            <person name="Mari F."/>
        </authorList>
    </citation>
    <scope>PROTEIN SEQUENCE</scope>
    <scope>SUBCELLULAR LOCATION</scope>
    <scope>TISSUE SPECIFICITY</scope>
    <scope>HYDROXYLATION AT PRO-4; PRO-5; PRO-10 AND PRO-15</scope>
    <source>
        <tissue>Venom</tissue>
    </source>
</reference>
<comment type="subcellular location">
    <subcellularLocation>
        <location evidence="2">Secreted</location>
    </subcellularLocation>
</comment>
<comment type="tissue specificity">
    <text evidence="2">Expressed by the venom duct.</text>
</comment>
<comment type="domain">
    <text evidence="4">The cysteine framework is III (CC-C-C-CC). Classified in the M-3 branch, since 3 residues stand between the fourth and the fifth cysteine residues.</text>
</comment>
<comment type="PTM">
    <text evidence="1 4">Contains 3 disulfide bonds (By similarity). They are not indicated here, since framework III presents two different connectivities (I-IV, II-V, III-VI and I-V, II-VI, III-IV).</text>
</comment>
<comment type="similarity">
    <text evidence="4">Belongs to the conotoxin M superfamily.</text>
</comment>